<keyword id="KW-0687">Ribonucleoprotein</keyword>
<keyword id="KW-0689">Ribosomal protein</keyword>
<keyword id="KW-0694">RNA-binding</keyword>
<keyword id="KW-0699">rRNA-binding</keyword>
<name>RL18_HYDS0</name>
<accession>B4U760</accession>
<proteinExistence type="inferred from homology"/>
<organism>
    <name type="scientific">Hydrogenobaculum sp. (strain Y04AAS1)</name>
    <dbReference type="NCBI Taxonomy" id="380749"/>
    <lineage>
        <taxon>Bacteria</taxon>
        <taxon>Pseudomonadati</taxon>
        <taxon>Aquificota</taxon>
        <taxon>Aquificia</taxon>
        <taxon>Aquificales</taxon>
        <taxon>Aquificaceae</taxon>
        <taxon>Hydrogenobaculum</taxon>
    </lineage>
</organism>
<reference key="1">
    <citation type="journal article" date="2009" name="J. Bacteriol.">
        <title>Complete and draft genome sequences of six members of the Aquificales.</title>
        <authorList>
            <person name="Reysenbach A.-L."/>
            <person name="Hamamura N."/>
            <person name="Podar M."/>
            <person name="Griffiths E."/>
            <person name="Ferreira S."/>
            <person name="Hochstein R."/>
            <person name="Heidelberg J."/>
            <person name="Johnson J."/>
            <person name="Mead D."/>
            <person name="Pohorille A."/>
            <person name="Sarmiento M."/>
            <person name="Schweighofer K."/>
            <person name="Seshadri R."/>
            <person name="Voytek M.A."/>
        </authorList>
    </citation>
    <scope>NUCLEOTIDE SEQUENCE [LARGE SCALE GENOMIC DNA]</scope>
    <source>
        <strain>Y04AAS1</strain>
    </source>
</reference>
<feature type="chain" id="PRO_1000142678" description="Large ribosomal subunit protein uL18">
    <location>
        <begin position="1"/>
        <end position="122"/>
    </location>
</feature>
<evidence type="ECO:0000255" key="1">
    <source>
        <dbReference type="HAMAP-Rule" id="MF_01337"/>
    </source>
</evidence>
<evidence type="ECO:0000305" key="2"/>
<gene>
    <name evidence="1" type="primary">rplR</name>
    <name type="ordered locus">HY04AAS1_0281</name>
</gene>
<protein>
    <recommendedName>
        <fullName evidence="1">Large ribosomal subunit protein uL18</fullName>
    </recommendedName>
    <alternativeName>
        <fullName evidence="2">50S ribosomal protein L18</fullName>
    </alternativeName>
</protein>
<dbReference type="EMBL" id="CP001130">
    <property type="protein sequence ID" value="ACG56971.1"/>
    <property type="molecule type" value="Genomic_DNA"/>
</dbReference>
<dbReference type="RefSeq" id="WP_012513327.1">
    <property type="nucleotide sequence ID" value="NC_011126.1"/>
</dbReference>
<dbReference type="SMR" id="B4U760"/>
<dbReference type="STRING" id="380749.HY04AAS1_0281"/>
<dbReference type="KEGG" id="hya:HY04AAS1_0281"/>
<dbReference type="eggNOG" id="COG0256">
    <property type="taxonomic scope" value="Bacteria"/>
</dbReference>
<dbReference type="HOGENOM" id="CLU_098841_0_1_0"/>
<dbReference type="OrthoDB" id="9810939at2"/>
<dbReference type="GO" id="GO:0022625">
    <property type="term" value="C:cytosolic large ribosomal subunit"/>
    <property type="evidence" value="ECO:0007669"/>
    <property type="project" value="TreeGrafter"/>
</dbReference>
<dbReference type="GO" id="GO:0008097">
    <property type="term" value="F:5S rRNA binding"/>
    <property type="evidence" value="ECO:0007669"/>
    <property type="project" value="TreeGrafter"/>
</dbReference>
<dbReference type="GO" id="GO:0003735">
    <property type="term" value="F:structural constituent of ribosome"/>
    <property type="evidence" value="ECO:0007669"/>
    <property type="project" value="InterPro"/>
</dbReference>
<dbReference type="GO" id="GO:0006412">
    <property type="term" value="P:translation"/>
    <property type="evidence" value="ECO:0007669"/>
    <property type="project" value="UniProtKB-UniRule"/>
</dbReference>
<dbReference type="CDD" id="cd00432">
    <property type="entry name" value="Ribosomal_L18_L5e"/>
    <property type="match status" value="1"/>
</dbReference>
<dbReference type="Gene3D" id="3.30.420.100">
    <property type="match status" value="1"/>
</dbReference>
<dbReference type="HAMAP" id="MF_01337_B">
    <property type="entry name" value="Ribosomal_uL18_B"/>
    <property type="match status" value="1"/>
</dbReference>
<dbReference type="InterPro" id="IPR004389">
    <property type="entry name" value="Ribosomal_uL18_bac-type"/>
</dbReference>
<dbReference type="InterPro" id="IPR005484">
    <property type="entry name" value="Ribosomal_uL18_bac/euk"/>
</dbReference>
<dbReference type="NCBIfam" id="TIGR00060">
    <property type="entry name" value="L18_bact"/>
    <property type="match status" value="1"/>
</dbReference>
<dbReference type="PANTHER" id="PTHR12899">
    <property type="entry name" value="39S RIBOSOMAL PROTEIN L18, MITOCHONDRIAL"/>
    <property type="match status" value="1"/>
</dbReference>
<dbReference type="PANTHER" id="PTHR12899:SF3">
    <property type="entry name" value="LARGE RIBOSOMAL SUBUNIT PROTEIN UL18M"/>
    <property type="match status" value="1"/>
</dbReference>
<dbReference type="Pfam" id="PF00861">
    <property type="entry name" value="Ribosomal_L18p"/>
    <property type="match status" value="1"/>
</dbReference>
<dbReference type="SUPFAM" id="SSF53137">
    <property type="entry name" value="Translational machinery components"/>
    <property type="match status" value="1"/>
</dbReference>
<comment type="function">
    <text evidence="1">This is one of the proteins that bind and probably mediate the attachment of the 5S RNA into the large ribosomal subunit, where it forms part of the central protuberance.</text>
</comment>
<comment type="subunit">
    <text evidence="1">Part of the 50S ribosomal subunit; part of the 5S rRNA/L5/L18/L25 subcomplex. Contacts the 5S and 23S rRNAs.</text>
</comment>
<comment type="similarity">
    <text evidence="1">Belongs to the universal ribosomal protein uL18 family.</text>
</comment>
<sequence length="122" mass="13745">MKLTREEKRIKRHRRIRKKISGTASRPRLCMYRSLNAFYASLVDDITGNAILTVSSLGKEYVDATGKRGGKSIEAVQKVAEILVQKAKEKGIDKAVFDRSGYLYHGKVKAFAEKCRELGLIN</sequence>